<name>RL10_PHOPR</name>
<organism>
    <name type="scientific">Photobacterium profundum (strain SS9)</name>
    <dbReference type="NCBI Taxonomy" id="298386"/>
    <lineage>
        <taxon>Bacteria</taxon>
        <taxon>Pseudomonadati</taxon>
        <taxon>Pseudomonadota</taxon>
        <taxon>Gammaproteobacteria</taxon>
        <taxon>Vibrionales</taxon>
        <taxon>Vibrionaceae</taxon>
        <taxon>Photobacterium</taxon>
    </lineage>
</organism>
<sequence>MALNLQDKKAIVAEVNEAANGALSAVVADSRGVAVGAMTSLRKQARENGVYLKVVRNTLARRAVEGTDFECLKDVFVGPSLIGFSNEHPGAAARLFKDFAKENKDFEFKAAAFEGAVVDAEVLATLPTYDEAIARLMMCMKEASAGKLVRTIAAVRDQKEEAAA</sequence>
<keyword id="KW-1185">Reference proteome</keyword>
<keyword id="KW-0687">Ribonucleoprotein</keyword>
<keyword id="KW-0689">Ribosomal protein</keyword>
<keyword id="KW-0694">RNA-binding</keyword>
<keyword id="KW-0699">rRNA-binding</keyword>
<proteinExistence type="inferred from homology"/>
<protein>
    <recommendedName>
        <fullName evidence="1">Large ribosomal subunit protein uL10</fullName>
    </recommendedName>
    <alternativeName>
        <fullName evidence="2">50S ribosomal protein L10</fullName>
    </alternativeName>
</protein>
<accession>Q6LLW0</accession>
<evidence type="ECO:0000255" key="1">
    <source>
        <dbReference type="HAMAP-Rule" id="MF_00362"/>
    </source>
</evidence>
<evidence type="ECO:0000305" key="2"/>
<feature type="chain" id="PRO_0000154684" description="Large ribosomal subunit protein uL10">
    <location>
        <begin position="1"/>
        <end position="164"/>
    </location>
</feature>
<dbReference type="EMBL" id="CR378674">
    <property type="protein sequence ID" value="CAG21718.1"/>
    <property type="status" value="ALT_INIT"/>
    <property type="molecule type" value="Genomic_DNA"/>
</dbReference>
<dbReference type="RefSeq" id="WP_006233765.1">
    <property type="nucleotide sequence ID" value="NC_006370.1"/>
</dbReference>
<dbReference type="STRING" id="298386.PBPRA3434"/>
<dbReference type="KEGG" id="ppr:PBPRA3434"/>
<dbReference type="eggNOG" id="COG0244">
    <property type="taxonomic scope" value="Bacteria"/>
</dbReference>
<dbReference type="HOGENOM" id="CLU_092227_0_2_6"/>
<dbReference type="Proteomes" id="UP000000593">
    <property type="component" value="Chromosome 1"/>
</dbReference>
<dbReference type="GO" id="GO:1990904">
    <property type="term" value="C:ribonucleoprotein complex"/>
    <property type="evidence" value="ECO:0007669"/>
    <property type="project" value="UniProtKB-KW"/>
</dbReference>
<dbReference type="GO" id="GO:0005840">
    <property type="term" value="C:ribosome"/>
    <property type="evidence" value="ECO:0007669"/>
    <property type="project" value="UniProtKB-KW"/>
</dbReference>
<dbReference type="GO" id="GO:0070180">
    <property type="term" value="F:large ribosomal subunit rRNA binding"/>
    <property type="evidence" value="ECO:0007669"/>
    <property type="project" value="UniProtKB-UniRule"/>
</dbReference>
<dbReference type="GO" id="GO:0006412">
    <property type="term" value="P:translation"/>
    <property type="evidence" value="ECO:0007669"/>
    <property type="project" value="UniProtKB-UniRule"/>
</dbReference>
<dbReference type="CDD" id="cd05797">
    <property type="entry name" value="Ribosomal_L10"/>
    <property type="match status" value="1"/>
</dbReference>
<dbReference type="FunFam" id="3.30.70.1730:FF:000001">
    <property type="entry name" value="50S ribosomal protein L10"/>
    <property type="match status" value="1"/>
</dbReference>
<dbReference type="Gene3D" id="3.30.70.1730">
    <property type="match status" value="1"/>
</dbReference>
<dbReference type="Gene3D" id="6.10.250.2350">
    <property type="match status" value="1"/>
</dbReference>
<dbReference type="HAMAP" id="MF_00362">
    <property type="entry name" value="Ribosomal_uL10"/>
    <property type="match status" value="1"/>
</dbReference>
<dbReference type="InterPro" id="IPR001790">
    <property type="entry name" value="Ribosomal_uL10"/>
</dbReference>
<dbReference type="InterPro" id="IPR043141">
    <property type="entry name" value="Ribosomal_uL10-like_sf"/>
</dbReference>
<dbReference type="InterPro" id="IPR022973">
    <property type="entry name" value="Ribosomal_uL10_bac"/>
</dbReference>
<dbReference type="InterPro" id="IPR047865">
    <property type="entry name" value="Ribosomal_uL10_bac_type"/>
</dbReference>
<dbReference type="NCBIfam" id="NF000955">
    <property type="entry name" value="PRK00099.1-1"/>
    <property type="match status" value="1"/>
</dbReference>
<dbReference type="PANTHER" id="PTHR11560">
    <property type="entry name" value="39S RIBOSOMAL PROTEIN L10, MITOCHONDRIAL"/>
    <property type="match status" value="1"/>
</dbReference>
<dbReference type="Pfam" id="PF00466">
    <property type="entry name" value="Ribosomal_L10"/>
    <property type="match status" value="1"/>
</dbReference>
<dbReference type="SUPFAM" id="SSF160369">
    <property type="entry name" value="Ribosomal protein L10-like"/>
    <property type="match status" value="1"/>
</dbReference>
<reference key="1">
    <citation type="journal article" date="2005" name="Science">
        <title>Life at depth: Photobacterium profundum genome sequence and expression analysis.</title>
        <authorList>
            <person name="Vezzi A."/>
            <person name="Campanaro S."/>
            <person name="D'Angelo M."/>
            <person name="Simonato F."/>
            <person name="Vitulo N."/>
            <person name="Lauro F.M."/>
            <person name="Cestaro A."/>
            <person name="Malacrida G."/>
            <person name="Simionati B."/>
            <person name="Cannata N."/>
            <person name="Romualdi C."/>
            <person name="Bartlett D.H."/>
            <person name="Valle G."/>
        </authorList>
    </citation>
    <scope>NUCLEOTIDE SEQUENCE [LARGE SCALE GENOMIC DNA]</scope>
    <source>
        <strain>ATCC BAA-1253 / SS9</strain>
    </source>
</reference>
<comment type="function">
    <text evidence="1">Forms part of the ribosomal stalk, playing a central role in the interaction of the ribosome with GTP-bound translation factors.</text>
</comment>
<comment type="subunit">
    <text evidence="1">Part of the ribosomal stalk of the 50S ribosomal subunit. The N-terminus interacts with L11 and the large rRNA to form the base of the stalk. The C-terminus forms an elongated spine to which L12 dimers bind in a sequential fashion forming a multimeric L10(L12)X complex.</text>
</comment>
<comment type="similarity">
    <text evidence="1">Belongs to the universal ribosomal protein uL10 family.</text>
</comment>
<comment type="sequence caution" evidence="2">
    <conflict type="erroneous initiation">
        <sequence resource="EMBL-CDS" id="CAG21718"/>
    </conflict>
</comment>
<gene>
    <name evidence="1" type="primary">rplJ</name>
    <name type="ordered locus">PBPRA3434</name>
</gene>